<protein>
    <recommendedName>
        <fullName>Mast cell degranulating peptide</fullName>
    </recommendedName>
</protein>
<proteinExistence type="evidence at transcript level"/>
<sequence>MISMLRCTFFFVSVILITSYFVTPTMSIKCNRKRHVIKPHICRKICGKNG</sequence>
<keyword id="KW-0027">Amidation</keyword>
<keyword id="KW-1015">Disulfide bond</keyword>
<keyword id="KW-0291">Formylation</keyword>
<keyword id="KW-0872">Ion channel impairing toxin</keyword>
<keyword id="KW-0467">Mast cell degranulation</keyword>
<keyword id="KW-0528">Neurotoxin</keyword>
<keyword id="KW-0632">Potassium channel impairing toxin</keyword>
<keyword id="KW-0964">Secreted</keyword>
<keyword id="KW-0732">Signal</keyword>
<keyword id="KW-0800">Toxin</keyword>
<name>MCDP_APICC</name>
<dbReference type="EMBL" id="AY327447">
    <property type="protein sequence ID" value="AAQ94692.1"/>
    <property type="molecule type" value="mRNA"/>
</dbReference>
<dbReference type="GO" id="GO:0005576">
    <property type="term" value="C:extracellular region"/>
    <property type="evidence" value="ECO:0007669"/>
    <property type="project" value="UniProtKB-SubCell"/>
</dbReference>
<dbReference type="GO" id="GO:0015459">
    <property type="term" value="F:potassium channel regulator activity"/>
    <property type="evidence" value="ECO:0007669"/>
    <property type="project" value="UniProtKB-KW"/>
</dbReference>
<dbReference type="GO" id="GO:0090729">
    <property type="term" value="F:toxin activity"/>
    <property type="evidence" value="ECO:0007669"/>
    <property type="project" value="UniProtKB-KW"/>
</dbReference>
<dbReference type="InterPro" id="IPR035361">
    <property type="entry name" value="Bee_toxin"/>
</dbReference>
<dbReference type="Pfam" id="PF17454">
    <property type="entry name" value="Bee_toxin"/>
    <property type="match status" value="1"/>
</dbReference>
<reference key="1">
    <citation type="journal article" date="2003" name="Yi Chuan Xue Bao">
        <title>Cloning and characterization analysis of the genes encoding precursor of mast cell degranulating peptide from 2 honeybee and 3 wasp species.</title>
        <authorList>
            <person name="Zhang S.F."/>
            <person name="Shi W.J."/>
            <person name="Cheng J.A."/>
            <person name="Zhang C.X."/>
        </authorList>
    </citation>
    <scope>NUCLEOTIDE SEQUENCE [MRNA]</scope>
    <source>
        <tissue>Venom gland</tissue>
    </source>
</reference>
<evidence type="ECO:0000250" key="1"/>
<evidence type="ECO:0000255" key="2"/>
<comment type="function">
    <text>Potent anti-inflammatory agent. At low concentrations, mediates the degranulation of mast cells thus evoking an inflammatory response. Also acts as a neurotoxin capable of blocking a class of voltage-gated potassium channels.</text>
</comment>
<comment type="subcellular location">
    <subcellularLocation>
        <location>Secreted</location>
    </subcellularLocation>
</comment>
<comment type="tissue specificity">
    <text>Expressed by the venom gland.</text>
</comment>
<accession>Q6H2Z4</accession>
<feature type="signal peptide" evidence="2">
    <location>
        <begin position="1"/>
        <end position="27"/>
    </location>
</feature>
<feature type="peptide" id="PRO_0000247529" description="Mast cell degranulating peptide">
    <location>
        <begin position="28"/>
        <end position="49"/>
    </location>
</feature>
<feature type="modified residue" description="N6-formyllysine" evidence="1">
    <location>
        <position position="29"/>
    </location>
</feature>
<feature type="modified residue" description="N6-formyllysine" evidence="1">
    <location>
        <position position="44"/>
    </location>
</feature>
<feature type="modified residue" description="N6-formyllysine" evidence="1">
    <location>
        <position position="48"/>
    </location>
</feature>
<feature type="modified residue" description="Asparagine amide" evidence="1">
    <location>
        <position position="49"/>
    </location>
</feature>
<feature type="disulfide bond" evidence="1">
    <location>
        <begin position="30"/>
        <end position="42"/>
    </location>
</feature>
<organism>
    <name type="scientific">Apis cerana cerana</name>
    <name type="common">Oriental honeybee</name>
    <dbReference type="NCBI Taxonomy" id="94128"/>
    <lineage>
        <taxon>Eukaryota</taxon>
        <taxon>Metazoa</taxon>
        <taxon>Ecdysozoa</taxon>
        <taxon>Arthropoda</taxon>
        <taxon>Hexapoda</taxon>
        <taxon>Insecta</taxon>
        <taxon>Pterygota</taxon>
        <taxon>Neoptera</taxon>
        <taxon>Endopterygota</taxon>
        <taxon>Hymenoptera</taxon>
        <taxon>Apocrita</taxon>
        <taxon>Aculeata</taxon>
        <taxon>Apoidea</taxon>
        <taxon>Anthophila</taxon>
        <taxon>Apidae</taxon>
        <taxon>Apis</taxon>
    </lineage>
</organism>